<protein>
    <recommendedName>
        <fullName>Mediator of RNA polymerase II transcription subunit 8</fullName>
    </recommendedName>
    <alternativeName>
        <fullName>Cell separation protein sep15</fullName>
    </alternativeName>
    <alternativeName>
        <fullName>Mediator complex subunit 8</fullName>
    </alternativeName>
</protein>
<name>MED8_SCHPO</name>
<comment type="function">
    <text>Component of the Mediator complex, a coactivator involved in the regulated transcription of nearly all RNA polymerase II-dependent genes. Mediator functions as a bridge to convey information from gene-specific regulatory proteins to the basal RNA polymerase II transcription machinery. Mediator is recruited to promoters by direct interactions with regulatory proteins and serves as a scaffold for the assembly of a functional preinitiation complex with RNA polymerase II and the general transcription factors.</text>
</comment>
<comment type="subunit">
    <text evidence="1">Component of the Mediator complex.</text>
</comment>
<comment type="interaction">
    <interactant intactId="EBI-1533413">
        <id>O94646</id>
    </interactant>
    <interactant intactId="EBI-697320">
        <id>O74825</id>
        <label>rpb4</label>
    </interactant>
    <organismsDiffer>false</organismsDiffer>
    <experiments>3</experiments>
</comment>
<comment type="subcellular location">
    <subcellularLocation>
        <location evidence="2">Nucleus</location>
    </subcellularLocation>
</comment>
<comment type="similarity">
    <text evidence="2">Belongs to the Mediator complex subunit 8 family.</text>
</comment>
<dbReference type="EMBL" id="AF093755">
    <property type="status" value="NOT_ANNOTATED_CDS"/>
    <property type="molecule type" value="Genomic_DNA"/>
</dbReference>
<dbReference type="EMBL" id="CU329671">
    <property type="protein sequence ID" value="CAB36884.1"/>
    <property type="molecule type" value="Genomic_DNA"/>
</dbReference>
<dbReference type="PIR" id="T39886">
    <property type="entry name" value="T39886"/>
</dbReference>
<dbReference type="RefSeq" id="NP_596338.1">
    <property type="nucleotide sequence ID" value="NM_001022259.2"/>
</dbReference>
<dbReference type="PDB" id="3C0T">
    <property type="method" value="X-ray"/>
    <property type="resolution" value="2.40 A"/>
    <property type="chains" value="B=180-200"/>
</dbReference>
<dbReference type="PDB" id="4H63">
    <property type="method" value="X-ray"/>
    <property type="resolution" value="3.40 A"/>
    <property type="chains" value="H=1-200"/>
</dbReference>
<dbReference type="PDB" id="5N9J">
    <property type="method" value="X-ray"/>
    <property type="resolution" value="3.40 A"/>
    <property type="chains" value="U=1-200"/>
</dbReference>
<dbReference type="PDB" id="5U0P">
    <property type="method" value="EM"/>
    <property type="resolution" value="4.40 A"/>
    <property type="chains" value="H=1-200"/>
</dbReference>
<dbReference type="PDB" id="5U0S">
    <property type="method" value="EM"/>
    <property type="resolution" value="7.80 A"/>
    <property type="chains" value="H=1-200"/>
</dbReference>
<dbReference type="PDBsum" id="3C0T"/>
<dbReference type="PDBsum" id="4H63"/>
<dbReference type="PDBsum" id="5N9J"/>
<dbReference type="PDBsum" id="5U0P"/>
<dbReference type="PDBsum" id="5U0S"/>
<dbReference type="EMDB" id="EMD-8479"/>
<dbReference type="EMDB" id="EMD-8480"/>
<dbReference type="SMR" id="O94646"/>
<dbReference type="BioGRID" id="277281">
    <property type="interactions" value="15"/>
</dbReference>
<dbReference type="DIP" id="DIP-38755N"/>
<dbReference type="FunCoup" id="O94646">
    <property type="interactions" value="88"/>
</dbReference>
<dbReference type="IntAct" id="O94646">
    <property type="interactions" value="5"/>
</dbReference>
<dbReference type="MINT" id="O94646"/>
<dbReference type="STRING" id="284812.O94646"/>
<dbReference type="iPTMnet" id="O94646"/>
<dbReference type="PaxDb" id="4896-SPBC21.04.1"/>
<dbReference type="EnsemblFungi" id="SPBC21.04.1">
    <property type="protein sequence ID" value="SPBC21.04.1:pep"/>
    <property type="gene ID" value="SPBC21.04"/>
</dbReference>
<dbReference type="GeneID" id="2540761"/>
<dbReference type="KEGG" id="spo:2540761"/>
<dbReference type="PomBase" id="SPBC21.04">
    <property type="gene designation" value="med8"/>
</dbReference>
<dbReference type="VEuPathDB" id="FungiDB:SPBC21.04"/>
<dbReference type="eggNOG" id="ENOG502S8U1">
    <property type="taxonomic scope" value="Eukaryota"/>
</dbReference>
<dbReference type="HOGENOM" id="CLU_108151_0_0_1"/>
<dbReference type="InParanoid" id="O94646"/>
<dbReference type="OMA" id="PQWYSLQ"/>
<dbReference type="PhylomeDB" id="O94646"/>
<dbReference type="EvolutionaryTrace" id="O94646"/>
<dbReference type="PRO" id="PR:O94646"/>
<dbReference type="Proteomes" id="UP000002485">
    <property type="component" value="Chromosome II"/>
</dbReference>
<dbReference type="GO" id="GO:0070847">
    <property type="term" value="C:core mediator complex"/>
    <property type="evidence" value="ECO:0000318"/>
    <property type="project" value="GO_Central"/>
</dbReference>
<dbReference type="GO" id="GO:0016592">
    <property type="term" value="C:mediator complex"/>
    <property type="evidence" value="ECO:0000314"/>
    <property type="project" value="PomBase"/>
</dbReference>
<dbReference type="GO" id="GO:0005634">
    <property type="term" value="C:nucleus"/>
    <property type="evidence" value="ECO:0007005"/>
    <property type="project" value="PomBase"/>
</dbReference>
<dbReference type="GO" id="GO:0000978">
    <property type="term" value="F:RNA polymerase II cis-regulatory region sequence-specific DNA binding"/>
    <property type="evidence" value="ECO:0000318"/>
    <property type="project" value="GO_Central"/>
</dbReference>
<dbReference type="GO" id="GO:0003713">
    <property type="term" value="F:transcription coactivator activity"/>
    <property type="evidence" value="ECO:0000314"/>
    <property type="project" value="PomBase"/>
</dbReference>
<dbReference type="GO" id="GO:0003712">
    <property type="term" value="F:transcription coregulator activity"/>
    <property type="evidence" value="ECO:0000318"/>
    <property type="project" value="GO_Central"/>
</dbReference>
<dbReference type="GO" id="GO:0060261">
    <property type="term" value="P:positive regulation of transcription initiation by RNA polymerase II"/>
    <property type="evidence" value="ECO:0000269"/>
    <property type="project" value="PomBase"/>
</dbReference>
<dbReference type="GO" id="GO:0006357">
    <property type="term" value="P:regulation of transcription by RNA polymerase II"/>
    <property type="evidence" value="ECO:0000318"/>
    <property type="project" value="GO_Central"/>
</dbReference>
<dbReference type="GO" id="GO:0006367">
    <property type="term" value="P:transcription initiation at RNA polymerase II promoter"/>
    <property type="evidence" value="ECO:0000314"/>
    <property type="project" value="PomBase"/>
</dbReference>
<dbReference type="FunFam" id="1.20.5.790:FF:000002">
    <property type="entry name" value="Mediator of RNA polymerase II transcription subunit 8"/>
    <property type="match status" value="1"/>
</dbReference>
<dbReference type="FunFam" id="1.20.58.1710:FF:000002">
    <property type="entry name" value="Mediator of RNA polymerase II transcription subunit 8"/>
    <property type="match status" value="1"/>
</dbReference>
<dbReference type="Gene3D" id="1.20.58.1710">
    <property type="match status" value="1"/>
</dbReference>
<dbReference type="Gene3D" id="6.10.250.2610">
    <property type="match status" value="1"/>
</dbReference>
<dbReference type="Gene3D" id="1.20.5.790">
    <property type="entry name" value="Single helix bin"/>
    <property type="match status" value="1"/>
</dbReference>
<dbReference type="InterPro" id="IPR019364">
    <property type="entry name" value="Mediatior_Med8_fun/met"/>
</dbReference>
<dbReference type="PANTHER" id="PTHR13074">
    <property type="entry name" value="MEDIATOR OF RNA POLYMERASE II TRANSCRIPTION SUBUNIT 8"/>
    <property type="match status" value="1"/>
</dbReference>
<dbReference type="PANTHER" id="PTHR13074:SF9">
    <property type="entry name" value="MEDIATOR OF RNA POLYMERASE II TRANSCRIPTION SUBUNIT 8"/>
    <property type="match status" value="1"/>
</dbReference>
<dbReference type="Pfam" id="PF10232">
    <property type="entry name" value="Med8"/>
    <property type="match status" value="1"/>
</dbReference>
<feature type="chain" id="PRO_0000096396" description="Mediator of RNA polymerase II transcription subunit 8">
    <location>
        <begin position="1"/>
        <end position="200"/>
    </location>
</feature>
<feature type="helix" evidence="4">
    <location>
        <begin position="4"/>
        <end position="37"/>
    </location>
</feature>
<feature type="helix" evidence="4">
    <location>
        <begin position="43"/>
        <end position="66"/>
    </location>
</feature>
<feature type="helix" evidence="4">
    <location>
        <begin position="68"/>
        <end position="72"/>
    </location>
</feature>
<feature type="strand" evidence="4">
    <location>
        <begin position="74"/>
        <end position="78"/>
    </location>
</feature>
<feature type="turn" evidence="4">
    <location>
        <begin position="84"/>
        <end position="86"/>
    </location>
</feature>
<feature type="helix" evidence="4">
    <location>
        <begin position="88"/>
        <end position="94"/>
    </location>
</feature>
<feature type="helix" evidence="4">
    <location>
        <begin position="101"/>
        <end position="117"/>
    </location>
</feature>
<feature type="helix" evidence="4">
    <location>
        <begin position="130"/>
        <end position="147"/>
    </location>
</feature>
<feature type="helix" evidence="4">
    <location>
        <begin position="148"/>
        <end position="150"/>
    </location>
</feature>
<feature type="strand" evidence="5">
    <location>
        <begin position="154"/>
        <end position="157"/>
    </location>
</feature>
<feature type="helix" evidence="5">
    <location>
        <begin position="160"/>
        <end position="165"/>
    </location>
</feature>
<feature type="helix" evidence="3">
    <location>
        <begin position="184"/>
        <end position="197"/>
    </location>
</feature>
<reference key="1">
    <citation type="journal article" date="2000" name="Curr. Genet.">
        <title>The Schizosaccharomyces pombe sep15+ gene encodes a protein homologous to the Med8 subunit of the Saccharomyces cerevisiae transcriptional mediator complex.</title>
        <authorList>
            <person name="Zilahi E."/>
            <person name="Miklos I."/>
            <person name="Sipiczki M."/>
        </authorList>
    </citation>
    <scope>NUCLEOTIDE SEQUENCE [GENOMIC DNA]</scope>
</reference>
<reference key="2">
    <citation type="journal article" date="2002" name="Nature">
        <title>The genome sequence of Schizosaccharomyces pombe.</title>
        <authorList>
            <person name="Wood V."/>
            <person name="Gwilliam R."/>
            <person name="Rajandream M.A."/>
            <person name="Lyne M.H."/>
            <person name="Lyne R."/>
            <person name="Stewart A."/>
            <person name="Sgouros J.G."/>
            <person name="Peat N."/>
            <person name="Hayles J."/>
            <person name="Baker S.G."/>
            <person name="Basham D."/>
            <person name="Bowman S."/>
            <person name="Brooks K."/>
            <person name="Brown D."/>
            <person name="Brown S."/>
            <person name="Chillingworth T."/>
            <person name="Churcher C.M."/>
            <person name="Collins M."/>
            <person name="Connor R."/>
            <person name="Cronin A."/>
            <person name="Davis P."/>
            <person name="Feltwell T."/>
            <person name="Fraser A."/>
            <person name="Gentles S."/>
            <person name="Goble A."/>
            <person name="Hamlin N."/>
            <person name="Harris D.E."/>
            <person name="Hidalgo J."/>
            <person name="Hodgson G."/>
            <person name="Holroyd S."/>
            <person name="Hornsby T."/>
            <person name="Howarth S."/>
            <person name="Huckle E.J."/>
            <person name="Hunt S."/>
            <person name="Jagels K."/>
            <person name="James K.D."/>
            <person name="Jones L."/>
            <person name="Jones M."/>
            <person name="Leather S."/>
            <person name="McDonald S."/>
            <person name="McLean J."/>
            <person name="Mooney P."/>
            <person name="Moule S."/>
            <person name="Mungall K.L."/>
            <person name="Murphy L.D."/>
            <person name="Niblett D."/>
            <person name="Odell C."/>
            <person name="Oliver K."/>
            <person name="O'Neil S."/>
            <person name="Pearson D."/>
            <person name="Quail M.A."/>
            <person name="Rabbinowitsch E."/>
            <person name="Rutherford K.M."/>
            <person name="Rutter S."/>
            <person name="Saunders D."/>
            <person name="Seeger K."/>
            <person name="Sharp S."/>
            <person name="Skelton J."/>
            <person name="Simmonds M.N."/>
            <person name="Squares R."/>
            <person name="Squares S."/>
            <person name="Stevens K."/>
            <person name="Taylor K."/>
            <person name="Taylor R.G."/>
            <person name="Tivey A."/>
            <person name="Walsh S.V."/>
            <person name="Warren T."/>
            <person name="Whitehead S."/>
            <person name="Woodward J.R."/>
            <person name="Volckaert G."/>
            <person name="Aert R."/>
            <person name="Robben J."/>
            <person name="Grymonprez B."/>
            <person name="Weltjens I."/>
            <person name="Vanstreels E."/>
            <person name="Rieger M."/>
            <person name="Schaefer M."/>
            <person name="Mueller-Auer S."/>
            <person name="Gabel C."/>
            <person name="Fuchs M."/>
            <person name="Duesterhoeft A."/>
            <person name="Fritzc C."/>
            <person name="Holzer E."/>
            <person name="Moestl D."/>
            <person name="Hilbert H."/>
            <person name="Borzym K."/>
            <person name="Langer I."/>
            <person name="Beck A."/>
            <person name="Lehrach H."/>
            <person name="Reinhardt R."/>
            <person name="Pohl T.M."/>
            <person name="Eger P."/>
            <person name="Zimmermann W."/>
            <person name="Wedler H."/>
            <person name="Wambutt R."/>
            <person name="Purnelle B."/>
            <person name="Goffeau A."/>
            <person name="Cadieu E."/>
            <person name="Dreano S."/>
            <person name="Gloux S."/>
            <person name="Lelaure V."/>
            <person name="Mottier S."/>
            <person name="Galibert F."/>
            <person name="Aves S.J."/>
            <person name="Xiang Z."/>
            <person name="Hunt C."/>
            <person name="Moore K."/>
            <person name="Hurst S.M."/>
            <person name="Lucas M."/>
            <person name="Rochet M."/>
            <person name="Gaillardin C."/>
            <person name="Tallada V.A."/>
            <person name="Garzon A."/>
            <person name="Thode G."/>
            <person name="Daga R.R."/>
            <person name="Cruzado L."/>
            <person name="Jimenez J."/>
            <person name="Sanchez M."/>
            <person name="del Rey F."/>
            <person name="Benito J."/>
            <person name="Dominguez A."/>
            <person name="Revuelta J.L."/>
            <person name="Moreno S."/>
            <person name="Armstrong J."/>
            <person name="Forsburg S.L."/>
            <person name="Cerutti L."/>
            <person name="Lowe T."/>
            <person name="McCombie W.R."/>
            <person name="Paulsen I."/>
            <person name="Potashkin J."/>
            <person name="Shpakovski G.V."/>
            <person name="Ussery D."/>
            <person name="Barrell B.G."/>
            <person name="Nurse P."/>
        </authorList>
    </citation>
    <scope>NUCLEOTIDE SEQUENCE [LARGE SCALE GENOMIC DNA]</scope>
    <source>
        <strain>972 / ATCC 24843</strain>
    </source>
</reference>
<reference key="3">
    <citation type="journal article" date="2001" name="Proc. Natl. Acad. Sci. U.S.A.">
        <title>Analysis of Schizosaccharomyces pombe mediator reveals a set of essential subunits conserved between yeast and metazoan cells.</title>
        <authorList>
            <person name="Spaehr H."/>
            <person name="Samuelsen C.O."/>
            <person name="Baraznenok V."/>
            <person name="Ernest I."/>
            <person name="Huylebroeck D."/>
            <person name="Remacle J.E."/>
            <person name="Samuelsson T."/>
            <person name="Kieselbach T."/>
            <person name="Holmberg S."/>
            <person name="Gustafsson C.M."/>
        </authorList>
    </citation>
    <scope>IDENTIFICATION BY MASS SPECTROMETRY</scope>
    <scope>IDENTIFICATION IN THE MEDIATOR COMPLEX</scope>
</reference>
<gene>
    <name type="primary">med8</name>
    <name type="synonym">sep15</name>
    <name type="ORF">SPBC21.04</name>
</gene>
<proteinExistence type="evidence at protein level"/>
<keyword id="KW-0002">3D-structure</keyword>
<keyword id="KW-0010">Activator</keyword>
<keyword id="KW-0539">Nucleus</keyword>
<keyword id="KW-1185">Reference proteome</keyword>
<keyword id="KW-0804">Transcription</keyword>
<keyword id="KW-0805">Transcription regulation</keyword>
<accession>O94646</accession>
<sequence length="200" mass="23333">MEDISTEKTVESLEAIRHRIAQIVQSLTHFLAILHQSESLSPWPTIHKNFNILLSQIHSLSNNLAAHSHTLQTTSIYPSLEFPVKEQEPLLTTLLRTKALPEVEEWEANTLQEYEASISSQPKKKEANDAYQKDQLWDQARIIFMEERENYSWFDFVTRRQESEGEFVSQRQLEIDRATEEQNANQMLTDILSFMKSGKR</sequence>
<evidence type="ECO:0000269" key="1">
    <source>
    </source>
</evidence>
<evidence type="ECO:0000305" key="2"/>
<evidence type="ECO:0007829" key="3">
    <source>
        <dbReference type="PDB" id="3C0T"/>
    </source>
</evidence>
<evidence type="ECO:0007829" key="4">
    <source>
        <dbReference type="PDB" id="4H63"/>
    </source>
</evidence>
<evidence type="ECO:0007829" key="5">
    <source>
        <dbReference type="PDB" id="5N9J"/>
    </source>
</evidence>
<organism>
    <name type="scientific">Schizosaccharomyces pombe (strain 972 / ATCC 24843)</name>
    <name type="common">Fission yeast</name>
    <dbReference type="NCBI Taxonomy" id="284812"/>
    <lineage>
        <taxon>Eukaryota</taxon>
        <taxon>Fungi</taxon>
        <taxon>Dikarya</taxon>
        <taxon>Ascomycota</taxon>
        <taxon>Taphrinomycotina</taxon>
        <taxon>Schizosaccharomycetes</taxon>
        <taxon>Schizosaccharomycetales</taxon>
        <taxon>Schizosaccharomycetaceae</taxon>
        <taxon>Schizosaccharomyces</taxon>
    </lineage>
</organism>